<name>ANUH_PENRF</name>
<keyword id="KW-1185">Reference proteome</keyword>
<keyword id="KW-0808">Transferase</keyword>
<feature type="chain" id="PRO_0000458202" description="Prenyltransferase anuH">
    <location>
        <begin position="1"/>
        <end position="451"/>
    </location>
</feature>
<feature type="binding site" evidence="1">
    <location>
        <position position="105"/>
    </location>
    <ligand>
        <name>dimethylallyl diphosphate</name>
        <dbReference type="ChEBI" id="CHEBI:57623"/>
    </ligand>
</feature>
<feature type="binding site" evidence="1">
    <location>
        <position position="189"/>
    </location>
    <ligand>
        <name>dimethylallyl diphosphate</name>
        <dbReference type="ChEBI" id="CHEBI:57623"/>
    </ligand>
</feature>
<feature type="binding site" evidence="1">
    <location>
        <position position="191"/>
    </location>
    <ligand>
        <name>dimethylallyl diphosphate</name>
        <dbReference type="ChEBI" id="CHEBI:57623"/>
    </ligand>
</feature>
<feature type="binding site" evidence="1">
    <location>
        <position position="257"/>
    </location>
    <ligand>
        <name>dimethylallyl diphosphate</name>
        <dbReference type="ChEBI" id="CHEBI:57623"/>
    </ligand>
</feature>
<feature type="binding site" evidence="1">
    <location>
        <position position="259"/>
    </location>
    <ligand>
        <name>dimethylallyl diphosphate</name>
        <dbReference type="ChEBI" id="CHEBI:57623"/>
    </ligand>
</feature>
<feature type="binding site" evidence="1">
    <location>
        <position position="422"/>
    </location>
    <ligand>
        <name>dimethylallyl diphosphate</name>
        <dbReference type="ChEBI" id="CHEBI:57623"/>
    </ligand>
</feature>
<protein>
    <recommendedName>
        <fullName evidence="3">Prenyltransferase anuH</fullName>
        <ecNumber evidence="2">2.5.1.-</ecNumber>
    </recommendedName>
    <alternativeName>
        <fullName evidence="3">Annullatin D biosynthesis cluster protein H</fullName>
    </alternativeName>
</protein>
<reference key="1">
    <citation type="journal article" date="2014" name="Nat. Commun.">
        <title>Multiple recent horizontal transfers of a large genomic region in cheese making fungi.</title>
        <authorList>
            <person name="Cheeseman K."/>
            <person name="Ropars J."/>
            <person name="Renault P."/>
            <person name="Dupont J."/>
            <person name="Gouzy J."/>
            <person name="Branca A."/>
            <person name="Abraham A.-L."/>
            <person name="Ceppi M."/>
            <person name="Conseiller E."/>
            <person name="Debuchy R."/>
            <person name="Malagnac F."/>
            <person name="Goarin A."/>
            <person name="Silar P."/>
            <person name="Lacoste S."/>
            <person name="Sallet E."/>
            <person name="Bensimon A."/>
            <person name="Giraud T."/>
            <person name="Brygoo Y."/>
        </authorList>
    </citation>
    <scope>NUCLEOTIDE SEQUENCE [LARGE SCALE GENOMIC DNA]</scope>
    <source>
        <strain>FM164</strain>
    </source>
</reference>
<reference key="2">
    <citation type="journal article" date="2022" name="Org. Lett.">
        <title>Biosynthesis of Annullatin D in Penicillium roqueforti Implies Oxidative Lactonization between Two Hydroxyl Groups Catalyzed by a BBE-like Enzyme.</title>
        <authorList>
            <person name="Xiang P."/>
            <person name="Kemmerich B."/>
            <person name="Yang L."/>
            <person name="Li S.M."/>
        </authorList>
    </citation>
    <scope>FUNCTION</scope>
    <scope>CATALYTIC ACTIVITY</scope>
    <scope>DISRUPTION PHENOTYPE</scope>
    <scope>BIOPHYSICOCHEMICAL PROPERTIES</scope>
    <scope>PATHWAY</scope>
</reference>
<organism>
    <name type="scientific">Penicillium roqueforti (strain FM164)</name>
    <dbReference type="NCBI Taxonomy" id="1365484"/>
    <lineage>
        <taxon>Eukaryota</taxon>
        <taxon>Fungi</taxon>
        <taxon>Dikarya</taxon>
        <taxon>Ascomycota</taxon>
        <taxon>Pezizomycotina</taxon>
        <taxon>Eurotiomycetes</taxon>
        <taxon>Eurotiomycetidae</taxon>
        <taxon>Eurotiales</taxon>
        <taxon>Aspergillaceae</taxon>
        <taxon>Penicillium</taxon>
    </lineage>
</organism>
<accession>W6QY29</accession>
<evidence type="ECO:0000250" key="1">
    <source>
        <dbReference type="UniProtKB" id="Q4WAW7"/>
    </source>
</evidence>
<evidence type="ECO:0000269" key="2">
    <source>
    </source>
</evidence>
<evidence type="ECO:0000303" key="3">
    <source>
    </source>
</evidence>
<evidence type="ECO:0000305" key="4"/>
<evidence type="ECO:0000305" key="5">
    <source>
    </source>
</evidence>
<dbReference type="EC" id="2.5.1.-" evidence="2"/>
<dbReference type="EMBL" id="HG792017">
    <property type="protein sequence ID" value="CDM34457.1"/>
    <property type="molecule type" value="Genomic_DNA"/>
</dbReference>
<dbReference type="SMR" id="W6QY29"/>
<dbReference type="STRING" id="1365484.W6QY29"/>
<dbReference type="OMA" id="KFYFQSP"/>
<dbReference type="OrthoDB" id="3354387at2759"/>
<dbReference type="Proteomes" id="UP000030686">
    <property type="component" value="Unassembled WGS sequence"/>
</dbReference>
<dbReference type="GO" id="GO:0004659">
    <property type="term" value="F:prenyltransferase activity"/>
    <property type="evidence" value="ECO:0007669"/>
    <property type="project" value="TreeGrafter"/>
</dbReference>
<dbReference type="GO" id="GO:0009820">
    <property type="term" value="P:alkaloid metabolic process"/>
    <property type="evidence" value="ECO:0007669"/>
    <property type="project" value="InterPro"/>
</dbReference>
<dbReference type="CDD" id="cd13929">
    <property type="entry name" value="PT-DMATS_CymD"/>
    <property type="match status" value="1"/>
</dbReference>
<dbReference type="InterPro" id="IPR033964">
    <property type="entry name" value="Aro_prenylTrfase"/>
</dbReference>
<dbReference type="InterPro" id="IPR017795">
    <property type="entry name" value="Aro_prenylTrfase_DMATS"/>
</dbReference>
<dbReference type="InterPro" id="IPR012148">
    <property type="entry name" value="DMATS-type_fun"/>
</dbReference>
<dbReference type="NCBIfam" id="TIGR03429">
    <property type="entry name" value="arom_pren_DMATS"/>
    <property type="match status" value="1"/>
</dbReference>
<dbReference type="PANTHER" id="PTHR40627">
    <property type="entry name" value="INDOLE PRENYLTRANSFERASE TDIB-RELATED"/>
    <property type="match status" value="1"/>
</dbReference>
<dbReference type="PANTHER" id="PTHR40627:SF4">
    <property type="entry name" value="PRENYLTRANSFERASE ASQH1-RELATED"/>
    <property type="match status" value="1"/>
</dbReference>
<dbReference type="Pfam" id="PF11991">
    <property type="entry name" value="Trp_DMAT"/>
    <property type="match status" value="1"/>
</dbReference>
<dbReference type="PIRSF" id="PIRSF000509">
    <property type="entry name" value="Trp_DMAT"/>
    <property type="match status" value="1"/>
</dbReference>
<dbReference type="SFLD" id="SFLDS00036">
    <property type="entry name" value="Aromatic_Prenyltransferase"/>
    <property type="match status" value="1"/>
</dbReference>
<dbReference type="SFLD" id="SFLDG01162">
    <property type="entry name" value="I"/>
    <property type="match status" value="1"/>
</dbReference>
<sequence>MVEVTRPPTKAWATLSPWLPSRGPDADYWWRLTGQHLSNMVEAAGYSTDQQYVALLFHYHWIVPYMGPAPGPDGNLKWKSLLGVEGSPIEYSWKWNTAAGKPDVRYTTEAIGSFTGTLLDPLNQQATLEMLHRIADFVPTVDLTWTNHFFATLYDHDRSKYAKEAAAGAHFTTTVVVAAEWLKNGLNLKTYFVPRRLGQSDGKLPIALWEESLKQLDPNSESRAAMHEFLNNDPEGKLLSPFMLAVDNVVPEKSRLKFYFQSPHTSFASVRQVMTMGGRIPVPESQLQELRSLIAAVTGLDSDFPEDSEVPCISEYNPAAKDNFVEIDLLLSGYLYYFDIAPGATVPDIKFYTPVRRYGPDDGALAKGIADWMTSRGRGEYSQRYLDMLADLTEHRKLEDGKGMQTYVSCLFKKSHLDVTSYIGPEAFDPARFLKHKAHTTRSTRRRSDSH</sequence>
<gene>
    <name evidence="3" type="primary">anuH</name>
    <name type="ORF">PROQFM164_S03g001181</name>
</gene>
<proteinExistence type="evidence at protein level"/>
<comment type="function">
    <text evidence="2 5">Cytochrome P450 monooxygenase; part of the gene cluster that mediates the biosynthesis of annullatin D, an alkylated aromatic polyketide with a fused dihydrobenzofuran lactone ring system that exhibits potent agonistic activities toward the cannabinoid receptors (PubMed:35939524). Within the pathway, anuH uses dimethylallyl diphosphate (DMAPP) to prenylate (8S)-annullatin E to produce (8S)-annullatin J. Geranyl and farnesyl diphosphate are not consumed by anuH for prenylation (PubMed:35939524). 2-hydroxymethyl-3-pentylphenol, without the hydroxyl group at the side chain, is also accepted by anuH, but only with low conversion yield (PubMed:35939524). The annullatin backbone 2-hydroxymethyl-3-pentylphenol is assembled from one acetyl-CoA starter unit and 5 malonyl-CoA elongation units by cooperation of the highly reducing polyketide synthase anuA, the short-chain dehydrogenase anuB and the oxidoreductase anuC, before being hydroxylated at the C-5 alkyl chain by the cytochrome P450 monooxygenase anuE to form (8S)-annullatin E. The prenyltransferase anuH subsequently installs one isoprenyl group at the benzene ring to form (8S)-annullatin J. Enzymatic or nonenzymatic dihydro-benzofuran ring formation between the prenyl and the phenolic hydroxyl groups in (8S)-annullatin J results in two diastereomers (2S,9S)-annullatin H and compound 12. The intermediate (2S,9S)-annullatin H is then converted to (2S,9S)-annullatin D by the FAD-linked oxidoreductase anuG-catalyzed five-member lactone ring formation. The isomer 12 acts as a substrate for the short-chain dehydrogenase anuF and is oxidized to (2R)-annullatin F, which is subsequently acetylated by an acetyltransferase leading to (2R)-annullatin G formation. The remaining enzymes identified within the cluster, anuD, anuI and anuJ, seem not to be involved in annullatin biosynthesis (Probable).</text>
</comment>
<comment type="catalytic activity">
    <reaction evidence="2">
        <text>(8S)-annullatin E + dimethylallyl diphosphate = (8S)-annullatin J + diphosphate</text>
        <dbReference type="Rhea" id="RHEA:76423"/>
        <dbReference type="ChEBI" id="CHEBI:33019"/>
        <dbReference type="ChEBI" id="CHEBI:57623"/>
        <dbReference type="ChEBI" id="CHEBI:195221"/>
        <dbReference type="ChEBI" id="CHEBI:195222"/>
    </reaction>
    <physiologicalReaction direction="left-to-right" evidence="2">
        <dbReference type="Rhea" id="RHEA:76424"/>
    </physiologicalReaction>
</comment>
<comment type="biophysicochemical properties">
    <kinetics>
        <KM evidence="2">0.08 mM for (8S)-annullatin</KM>
        <KM evidence="2">0.49 mM for dimethylallyl diphosphate (DMAPP)</KM>
    </kinetics>
</comment>
<comment type="pathway">
    <text evidence="2">Secondary metabolite biosynthesis.</text>
</comment>
<comment type="disruption phenotype">
    <text evidence="2">Abolishes the production of (2R)-annullatin F, (2S,9S)-annullatin D, (2R)-annullatin G and (2S,9S)-annullatin H, and leads to the accumulation of (8S)-annullatin E.</text>
</comment>
<comment type="similarity">
    <text evidence="4">Belongs to the tryptophan dimethylallyltransferase family.</text>
</comment>